<keyword id="KW-0067">ATP-binding</keyword>
<keyword id="KW-0418">Kinase</keyword>
<keyword id="KW-0547">Nucleotide-binding</keyword>
<keyword id="KW-0808">Transferase</keyword>
<sequence length="325" mass="35869">MNLNKHSERKFDLITVGRACIDLNAVEYNRPMEETMTFSKYVGGSPANIAIGTAKLGLKVGFIGKISDDQHGRFIEKYMRDLNINTDGMVKDTAGRKVGLAFTEIKSPEECSILMYRENVADLYLTPEEISEDYIKETRVLLVSGTALAQSPSREAVLKAVHLAQKNDVIVAFELDYRPYTWKNTEETAVYYSLVAEQADVIIGTRDEFDMMENQIGGNNEMTIDNLFKHKAEIIVIKHGVEGSFAYTKAGETFRAQAYKTKVLKTFGAGDSYASAFLYGLFSGENIETALKFGSAAASIVVSKHSSSDAMPTADEIKALIANAD</sequence>
<comment type="function">
    <text evidence="1">Catalyzes the phosphorylation of 5-dehydro-2-deoxy-D-gluconate (2-deoxy-5-keto-D-gluconate or DKG) to 6-phospho-5-dehydro-2-deoxy-D-gluconate (DKGP).</text>
</comment>
<comment type="catalytic activity">
    <reaction evidence="1">
        <text>5-dehydro-2-deoxy-D-gluconate + ATP = 6-phospho-5-dehydro-2-deoxy-D-gluconate + ADP + H(+)</text>
        <dbReference type="Rhea" id="RHEA:13497"/>
        <dbReference type="ChEBI" id="CHEBI:15378"/>
        <dbReference type="ChEBI" id="CHEBI:16669"/>
        <dbReference type="ChEBI" id="CHEBI:30616"/>
        <dbReference type="ChEBI" id="CHEBI:57949"/>
        <dbReference type="ChEBI" id="CHEBI:456216"/>
        <dbReference type="EC" id="2.7.1.92"/>
    </reaction>
</comment>
<comment type="pathway">
    <text evidence="1">Polyol metabolism; myo-inositol degradation into acetyl-CoA; acetyl-CoA from myo-inositol: step 5/7.</text>
</comment>
<comment type="similarity">
    <text evidence="1">Belongs to the carbohydrate kinase PfkB family.</text>
</comment>
<evidence type="ECO:0000255" key="1">
    <source>
        <dbReference type="HAMAP-Rule" id="MF_01668"/>
    </source>
</evidence>
<dbReference type="EC" id="2.7.1.92" evidence="1"/>
<dbReference type="EMBL" id="AL596164">
    <property type="protein sequence ID" value="CAC95636.1"/>
    <property type="molecule type" value="Genomic_DNA"/>
</dbReference>
<dbReference type="PIR" id="AD1483">
    <property type="entry name" value="AD1483"/>
</dbReference>
<dbReference type="RefSeq" id="WP_010990386.1">
    <property type="nucleotide sequence ID" value="NC_003212.1"/>
</dbReference>
<dbReference type="SMR" id="Q92EQ5"/>
<dbReference type="STRING" id="272626.gene:17564730"/>
<dbReference type="KEGG" id="lin:lin0403"/>
<dbReference type="eggNOG" id="COG0524">
    <property type="taxonomic scope" value="Bacteria"/>
</dbReference>
<dbReference type="HOGENOM" id="CLU_027634_6_0_9"/>
<dbReference type="OrthoDB" id="9813569at2"/>
<dbReference type="UniPathway" id="UPA00076">
    <property type="reaction ID" value="UER00146"/>
</dbReference>
<dbReference type="Proteomes" id="UP000002513">
    <property type="component" value="Chromosome"/>
</dbReference>
<dbReference type="GO" id="GO:0047590">
    <property type="term" value="F:5-dehydro-2-deoxygluconokinase activity"/>
    <property type="evidence" value="ECO:0007669"/>
    <property type="project" value="UniProtKB-UniRule"/>
</dbReference>
<dbReference type="GO" id="GO:0005524">
    <property type="term" value="F:ATP binding"/>
    <property type="evidence" value="ECO:0007669"/>
    <property type="project" value="UniProtKB-UniRule"/>
</dbReference>
<dbReference type="GO" id="GO:0019310">
    <property type="term" value="P:inositol catabolic process"/>
    <property type="evidence" value="ECO:0007669"/>
    <property type="project" value="UniProtKB-UniRule"/>
</dbReference>
<dbReference type="CDD" id="cd01166">
    <property type="entry name" value="KdgK"/>
    <property type="match status" value="1"/>
</dbReference>
<dbReference type="Gene3D" id="3.40.1190.20">
    <property type="match status" value="1"/>
</dbReference>
<dbReference type="Gene3D" id="2.20.150.10">
    <property type="entry name" value="putative 5-dehydro-2- deoxygluconokinase"/>
    <property type="match status" value="1"/>
</dbReference>
<dbReference type="HAMAP" id="MF_01668">
    <property type="entry name" value="IolC"/>
    <property type="match status" value="1"/>
</dbReference>
<dbReference type="InterPro" id="IPR002173">
    <property type="entry name" value="Carboh/pur_kinase_PfkB_CS"/>
</dbReference>
<dbReference type="InterPro" id="IPR022841">
    <property type="entry name" value="DKG_kinase_firmi"/>
</dbReference>
<dbReference type="InterPro" id="IPR030830">
    <property type="entry name" value="Myo_inos_IolC"/>
</dbReference>
<dbReference type="InterPro" id="IPR023314">
    <property type="entry name" value="Myo_inos_IolC-like_sf"/>
</dbReference>
<dbReference type="InterPro" id="IPR050306">
    <property type="entry name" value="PfkB_Carbo_kinase"/>
</dbReference>
<dbReference type="InterPro" id="IPR011611">
    <property type="entry name" value="PfkB_dom"/>
</dbReference>
<dbReference type="InterPro" id="IPR029056">
    <property type="entry name" value="Ribokinase-like"/>
</dbReference>
<dbReference type="NCBIfam" id="TIGR04382">
    <property type="entry name" value="myo_inos_iolC_N"/>
    <property type="match status" value="1"/>
</dbReference>
<dbReference type="PANTHER" id="PTHR43085:SF49">
    <property type="entry name" value="5-DEHYDRO-2-DEOXYGLUCONOKINASE"/>
    <property type="match status" value="1"/>
</dbReference>
<dbReference type="PANTHER" id="PTHR43085">
    <property type="entry name" value="HEXOKINASE FAMILY MEMBER"/>
    <property type="match status" value="1"/>
</dbReference>
<dbReference type="Pfam" id="PF00294">
    <property type="entry name" value="PfkB"/>
    <property type="match status" value="1"/>
</dbReference>
<dbReference type="SUPFAM" id="SSF53613">
    <property type="entry name" value="Ribokinase-like"/>
    <property type="match status" value="1"/>
</dbReference>
<dbReference type="PROSITE" id="PS00584">
    <property type="entry name" value="PFKB_KINASES_2"/>
    <property type="match status" value="1"/>
</dbReference>
<feature type="chain" id="PRO_0000352302" description="5-dehydro-2-deoxygluconokinase">
    <location>
        <begin position="1"/>
        <end position="325"/>
    </location>
</feature>
<reference key="1">
    <citation type="journal article" date="2001" name="Science">
        <title>Comparative genomics of Listeria species.</title>
        <authorList>
            <person name="Glaser P."/>
            <person name="Frangeul L."/>
            <person name="Buchrieser C."/>
            <person name="Rusniok C."/>
            <person name="Amend A."/>
            <person name="Baquero F."/>
            <person name="Berche P."/>
            <person name="Bloecker H."/>
            <person name="Brandt P."/>
            <person name="Chakraborty T."/>
            <person name="Charbit A."/>
            <person name="Chetouani F."/>
            <person name="Couve E."/>
            <person name="de Daruvar A."/>
            <person name="Dehoux P."/>
            <person name="Domann E."/>
            <person name="Dominguez-Bernal G."/>
            <person name="Duchaud E."/>
            <person name="Durant L."/>
            <person name="Dussurget O."/>
            <person name="Entian K.-D."/>
            <person name="Fsihi H."/>
            <person name="Garcia-del Portillo F."/>
            <person name="Garrido P."/>
            <person name="Gautier L."/>
            <person name="Goebel W."/>
            <person name="Gomez-Lopez N."/>
            <person name="Hain T."/>
            <person name="Hauf J."/>
            <person name="Jackson D."/>
            <person name="Jones L.-M."/>
            <person name="Kaerst U."/>
            <person name="Kreft J."/>
            <person name="Kuhn M."/>
            <person name="Kunst F."/>
            <person name="Kurapkat G."/>
            <person name="Madueno E."/>
            <person name="Maitournam A."/>
            <person name="Mata Vicente J."/>
            <person name="Ng E."/>
            <person name="Nedjari H."/>
            <person name="Nordsiek G."/>
            <person name="Novella S."/>
            <person name="de Pablos B."/>
            <person name="Perez-Diaz J.-C."/>
            <person name="Purcell R."/>
            <person name="Remmel B."/>
            <person name="Rose M."/>
            <person name="Schlueter T."/>
            <person name="Simoes N."/>
            <person name="Tierrez A."/>
            <person name="Vazquez-Boland J.-A."/>
            <person name="Voss H."/>
            <person name="Wehland J."/>
            <person name="Cossart P."/>
        </authorList>
    </citation>
    <scope>NUCLEOTIDE SEQUENCE [LARGE SCALE GENOMIC DNA]</scope>
    <source>
        <strain>ATCC BAA-680 / CLIP 11262</strain>
    </source>
</reference>
<protein>
    <recommendedName>
        <fullName evidence="1">5-dehydro-2-deoxygluconokinase</fullName>
        <ecNumber evidence="1">2.7.1.92</ecNumber>
    </recommendedName>
    <alternativeName>
        <fullName evidence="1">2-deoxy-5-keto-D-gluconate kinase</fullName>
        <shortName evidence="1">DKG kinase</shortName>
    </alternativeName>
</protein>
<name>IOLC_LISIN</name>
<gene>
    <name evidence="1" type="primary">iolC</name>
    <name type="ordered locus">lin0403</name>
</gene>
<proteinExistence type="inferred from homology"/>
<organism>
    <name type="scientific">Listeria innocua serovar 6a (strain ATCC BAA-680 / CLIP 11262)</name>
    <dbReference type="NCBI Taxonomy" id="272626"/>
    <lineage>
        <taxon>Bacteria</taxon>
        <taxon>Bacillati</taxon>
        <taxon>Bacillota</taxon>
        <taxon>Bacilli</taxon>
        <taxon>Bacillales</taxon>
        <taxon>Listeriaceae</taxon>
        <taxon>Listeria</taxon>
    </lineage>
</organism>
<accession>Q92EQ5</accession>